<organism>
    <name type="scientific">Staphylococcus aureus (strain MW2)</name>
    <dbReference type="NCBI Taxonomy" id="196620"/>
    <lineage>
        <taxon>Bacteria</taxon>
        <taxon>Bacillati</taxon>
        <taxon>Bacillota</taxon>
        <taxon>Bacilli</taxon>
        <taxon>Bacillales</taxon>
        <taxon>Staphylococcaceae</taxon>
        <taxon>Staphylococcus</taxon>
    </lineage>
</organism>
<evidence type="ECO:0000250" key="1"/>
<evidence type="ECO:0000255" key="2"/>
<evidence type="ECO:0000305" key="3"/>
<comment type="function">
    <text evidence="1">Transcriptional regulator acting as an intermediary between major regulators SarA and agr and virulence genes. Represses alpha-hemolysin (hla) gene expression (By similarity).</text>
</comment>
<comment type="subcellular location">
    <subcellularLocation>
        <location evidence="1">Cytoplasm</location>
    </subcellularLocation>
</comment>
<comment type="similarity">
    <text evidence="3">Belongs to the SarA family.</text>
</comment>
<comment type="sequence caution" evidence="3">
    <conflict type="erroneous initiation">
        <sequence resource="EMBL-CDS" id="BAB96282"/>
    </conflict>
</comment>
<protein>
    <recommendedName>
        <fullName>HTH-type transcriptional regulator SarT</fullName>
    </recommendedName>
    <alternativeName>
        <fullName>Staphylococcal accessory regulator T</fullName>
    </alternativeName>
</protein>
<name>SART_STAAW</name>
<sequence>MNDLKSKSNIKLMKRVLTTYELRKYLKKYFCLTLDNYLVLAYLDVFKNDEGKYFMRDIISYIGIDQSRIVKSVKELSKKGYLNKCRDPHDSRNVIIVVSVKQHNYIKNLLSEININET</sequence>
<keyword id="KW-0010">Activator</keyword>
<keyword id="KW-0963">Cytoplasm</keyword>
<keyword id="KW-0238">DNA-binding</keyword>
<keyword id="KW-0678">Repressor</keyword>
<keyword id="KW-0804">Transcription</keyword>
<keyword id="KW-0805">Transcription regulation</keyword>
<keyword id="KW-0843">Virulence</keyword>
<gene>
    <name type="primary">sarT</name>
    <name type="ordered locus">MW2417</name>
</gene>
<feature type="chain" id="PRO_0000219601" description="HTH-type transcriptional regulator SarT">
    <location>
        <begin position="1"/>
        <end position="118"/>
    </location>
</feature>
<feature type="DNA-binding region" description="H-T-H motif" evidence="2">
    <location>
        <begin position="55"/>
        <end position="78"/>
    </location>
</feature>
<reference key="1">
    <citation type="journal article" date="2002" name="Lancet">
        <title>Genome and virulence determinants of high virulence community-acquired MRSA.</title>
        <authorList>
            <person name="Baba T."/>
            <person name="Takeuchi F."/>
            <person name="Kuroda M."/>
            <person name="Yuzawa H."/>
            <person name="Aoki K."/>
            <person name="Oguchi A."/>
            <person name="Nagai Y."/>
            <person name="Iwama N."/>
            <person name="Asano K."/>
            <person name="Naimi T."/>
            <person name="Kuroda H."/>
            <person name="Cui L."/>
            <person name="Yamamoto K."/>
            <person name="Hiramatsu K."/>
        </authorList>
    </citation>
    <scope>NUCLEOTIDE SEQUENCE [LARGE SCALE GENOMIC DNA]</scope>
    <source>
        <strain>MW2</strain>
    </source>
</reference>
<accession>Q7A005</accession>
<dbReference type="EMBL" id="BA000033">
    <property type="protein sequence ID" value="BAB96282.1"/>
    <property type="status" value="ALT_INIT"/>
    <property type="molecule type" value="Genomic_DNA"/>
</dbReference>
<dbReference type="RefSeq" id="WP_000998872.1">
    <property type="nucleotide sequence ID" value="NC_003923.1"/>
</dbReference>
<dbReference type="SMR" id="Q7A005"/>
<dbReference type="KEGG" id="sam:MW2417"/>
<dbReference type="HOGENOM" id="CLU_2095348_0_0_9"/>
<dbReference type="GO" id="GO:0005737">
    <property type="term" value="C:cytoplasm"/>
    <property type="evidence" value="ECO:0007669"/>
    <property type="project" value="UniProtKB-SubCell"/>
</dbReference>
<dbReference type="GO" id="GO:0003677">
    <property type="term" value="F:DNA binding"/>
    <property type="evidence" value="ECO:0007669"/>
    <property type="project" value="UniProtKB-KW"/>
</dbReference>
<dbReference type="GO" id="GO:0003700">
    <property type="term" value="F:DNA-binding transcription factor activity"/>
    <property type="evidence" value="ECO:0007669"/>
    <property type="project" value="InterPro"/>
</dbReference>
<dbReference type="GO" id="GO:0006950">
    <property type="term" value="P:response to stress"/>
    <property type="evidence" value="ECO:0007669"/>
    <property type="project" value="TreeGrafter"/>
</dbReference>
<dbReference type="Gene3D" id="1.10.10.10">
    <property type="entry name" value="Winged helix-like DNA-binding domain superfamily/Winged helix DNA-binding domain"/>
    <property type="match status" value="1"/>
</dbReference>
<dbReference type="InterPro" id="IPR039422">
    <property type="entry name" value="MarR/SlyA-like"/>
</dbReference>
<dbReference type="InterPro" id="IPR010166">
    <property type="entry name" value="SarA/Rot_dom"/>
</dbReference>
<dbReference type="InterPro" id="IPR055166">
    <property type="entry name" value="Transc_reg_Sar_Rot_HTH"/>
</dbReference>
<dbReference type="InterPro" id="IPR036388">
    <property type="entry name" value="WH-like_DNA-bd_sf"/>
</dbReference>
<dbReference type="InterPro" id="IPR036390">
    <property type="entry name" value="WH_DNA-bd_sf"/>
</dbReference>
<dbReference type="NCBIfam" id="TIGR01889">
    <property type="entry name" value="Staph_reg_Sar"/>
    <property type="match status" value="1"/>
</dbReference>
<dbReference type="PANTHER" id="PTHR33164:SF5">
    <property type="entry name" value="ORGANIC HYDROPEROXIDE RESISTANCE TRANSCRIPTIONAL REGULATOR"/>
    <property type="match status" value="1"/>
</dbReference>
<dbReference type="PANTHER" id="PTHR33164">
    <property type="entry name" value="TRANSCRIPTIONAL REGULATOR, MARR FAMILY"/>
    <property type="match status" value="1"/>
</dbReference>
<dbReference type="Pfam" id="PF22381">
    <property type="entry name" value="Staph_reg_Sar_Rot"/>
    <property type="match status" value="1"/>
</dbReference>
<dbReference type="SUPFAM" id="SSF46785">
    <property type="entry name" value="Winged helix' DNA-binding domain"/>
    <property type="match status" value="1"/>
</dbReference>
<proteinExistence type="inferred from homology"/>